<sequence>MVSSFTSAPRSGFYYFAQGWKLVLQPGIRRFVILPLLVNILLMGGAFWWLFTQLDVWIPTLMSYVPDWLQWLSYLLWPLAVISVLLVFGYFFSTIANWIAAPFNGLLAEQLEARLTGATPPDTGIFGIMKDVPRIMKREWQKFAWYLPRAIVLLILYFIPGIGQTVAPVLWFLFSAWMLAIQYCDYPFDNHKVPFKEMRTALRTRKITNMQFGALTSLFTMIPLLNLFIMPVAVCGATAMWVDCYRDKHAMWR</sequence>
<accession>B7MY66</accession>
<protein>
    <recommendedName>
        <fullName evidence="1">Sulfate transporter CysZ</fullName>
    </recommendedName>
</protein>
<dbReference type="EMBL" id="CU928162">
    <property type="protein sequence ID" value="CAR09032.2"/>
    <property type="molecule type" value="Genomic_DNA"/>
</dbReference>
<dbReference type="RefSeq" id="WP_000254826.1">
    <property type="nucleotide sequence ID" value="NC_011745.1"/>
</dbReference>
<dbReference type="SMR" id="B7MY66"/>
<dbReference type="KEGG" id="ecq:ECED1_2857"/>
<dbReference type="HOGENOM" id="CLU_070331_1_0_6"/>
<dbReference type="Proteomes" id="UP000000748">
    <property type="component" value="Chromosome"/>
</dbReference>
<dbReference type="GO" id="GO:0005886">
    <property type="term" value="C:plasma membrane"/>
    <property type="evidence" value="ECO:0007669"/>
    <property type="project" value="UniProtKB-SubCell"/>
</dbReference>
<dbReference type="GO" id="GO:0009675">
    <property type="term" value="F:high-affinity sulfate:proton symporter activity"/>
    <property type="evidence" value="ECO:0007669"/>
    <property type="project" value="TreeGrafter"/>
</dbReference>
<dbReference type="GO" id="GO:0019344">
    <property type="term" value="P:cysteine biosynthetic process"/>
    <property type="evidence" value="ECO:0007669"/>
    <property type="project" value="UniProtKB-UniRule"/>
</dbReference>
<dbReference type="GO" id="GO:0000103">
    <property type="term" value="P:sulfate assimilation"/>
    <property type="evidence" value="ECO:0007669"/>
    <property type="project" value="InterPro"/>
</dbReference>
<dbReference type="HAMAP" id="MF_00468">
    <property type="entry name" value="CysZ"/>
    <property type="match status" value="1"/>
</dbReference>
<dbReference type="InterPro" id="IPR050480">
    <property type="entry name" value="CysZ_sulfate_transptr"/>
</dbReference>
<dbReference type="InterPro" id="IPR022985">
    <property type="entry name" value="Sulfate_CysZ"/>
</dbReference>
<dbReference type="NCBIfam" id="NF003433">
    <property type="entry name" value="PRK04949.1"/>
    <property type="match status" value="1"/>
</dbReference>
<dbReference type="PANTHER" id="PTHR37468">
    <property type="entry name" value="SULFATE TRANSPORTER CYSZ"/>
    <property type="match status" value="1"/>
</dbReference>
<dbReference type="PANTHER" id="PTHR37468:SF1">
    <property type="entry name" value="SULFATE TRANSPORTER CYSZ"/>
    <property type="match status" value="1"/>
</dbReference>
<dbReference type="Pfam" id="PF07264">
    <property type="entry name" value="EI24"/>
    <property type="match status" value="1"/>
</dbReference>
<comment type="function">
    <text evidence="1">High affinity, high specificity proton-dependent sulfate transporter, which mediates sulfate uptake. Provides the sulfur source for the cysteine synthesis pathway.</text>
</comment>
<comment type="subcellular location">
    <subcellularLocation>
        <location evidence="1">Cell inner membrane</location>
        <topology evidence="1">Multi-pass membrane protein</topology>
    </subcellularLocation>
</comment>
<comment type="similarity">
    <text evidence="1">Belongs to the CysZ family.</text>
</comment>
<gene>
    <name evidence="1" type="primary">cysZ</name>
    <name type="ordered locus">ECED1_2857</name>
</gene>
<evidence type="ECO:0000255" key="1">
    <source>
        <dbReference type="HAMAP-Rule" id="MF_00468"/>
    </source>
</evidence>
<feature type="chain" id="PRO_1000135454" description="Sulfate transporter CysZ">
    <location>
        <begin position="1"/>
        <end position="253"/>
    </location>
</feature>
<feature type="transmembrane region" description="Helical" evidence="1">
    <location>
        <begin position="31"/>
        <end position="51"/>
    </location>
</feature>
<feature type="transmembrane region" description="Helical" evidence="1">
    <location>
        <begin position="75"/>
        <end position="95"/>
    </location>
</feature>
<feature type="transmembrane region" description="Helical" evidence="1">
    <location>
        <begin position="151"/>
        <end position="171"/>
    </location>
</feature>
<feature type="transmembrane region" description="Helical" evidence="1">
    <location>
        <begin position="222"/>
        <end position="242"/>
    </location>
</feature>
<keyword id="KW-0028">Amino-acid biosynthesis</keyword>
<keyword id="KW-0997">Cell inner membrane</keyword>
<keyword id="KW-1003">Cell membrane</keyword>
<keyword id="KW-0198">Cysteine biosynthesis</keyword>
<keyword id="KW-0472">Membrane</keyword>
<keyword id="KW-0764">Sulfate transport</keyword>
<keyword id="KW-0812">Transmembrane</keyword>
<keyword id="KW-1133">Transmembrane helix</keyword>
<keyword id="KW-0813">Transport</keyword>
<reference key="1">
    <citation type="journal article" date="2009" name="PLoS Genet.">
        <title>Organised genome dynamics in the Escherichia coli species results in highly diverse adaptive paths.</title>
        <authorList>
            <person name="Touchon M."/>
            <person name="Hoede C."/>
            <person name="Tenaillon O."/>
            <person name="Barbe V."/>
            <person name="Baeriswyl S."/>
            <person name="Bidet P."/>
            <person name="Bingen E."/>
            <person name="Bonacorsi S."/>
            <person name="Bouchier C."/>
            <person name="Bouvet O."/>
            <person name="Calteau A."/>
            <person name="Chiapello H."/>
            <person name="Clermont O."/>
            <person name="Cruveiller S."/>
            <person name="Danchin A."/>
            <person name="Diard M."/>
            <person name="Dossat C."/>
            <person name="Karoui M.E."/>
            <person name="Frapy E."/>
            <person name="Garry L."/>
            <person name="Ghigo J.M."/>
            <person name="Gilles A.M."/>
            <person name="Johnson J."/>
            <person name="Le Bouguenec C."/>
            <person name="Lescat M."/>
            <person name="Mangenot S."/>
            <person name="Martinez-Jehanne V."/>
            <person name="Matic I."/>
            <person name="Nassif X."/>
            <person name="Oztas S."/>
            <person name="Petit M.A."/>
            <person name="Pichon C."/>
            <person name="Rouy Z."/>
            <person name="Ruf C.S."/>
            <person name="Schneider D."/>
            <person name="Tourret J."/>
            <person name="Vacherie B."/>
            <person name="Vallenet D."/>
            <person name="Medigue C."/>
            <person name="Rocha E.P.C."/>
            <person name="Denamur E."/>
        </authorList>
    </citation>
    <scope>NUCLEOTIDE SEQUENCE [LARGE SCALE GENOMIC DNA]</scope>
    <source>
        <strain>ED1a</strain>
    </source>
</reference>
<name>CYSZ_ECO81</name>
<organism>
    <name type="scientific">Escherichia coli O81 (strain ED1a)</name>
    <dbReference type="NCBI Taxonomy" id="585397"/>
    <lineage>
        <taxon>Bacteria</taxon>
        <taxon>Pseudomonadati</taxon>
        <taxon>Pseudomonadota</taxon>
        <taxon>Gammaproteobacteria</taxon>
        <taxon>Enterobacterales</taxon>
        <taxon>Enterobacteriaceae</taxon>
        <taxon>Escherichia</taxon>
    </lineage>
</organism>
<proteinExistence type="inferred from homology"/>